<sequence>MKRTFIMVLDSFGIGASADAKKFGDEGADTLGHIAEACARGEANVGRSGPLTLPNLSRLGLGKAAEESTGTFPVGLDKNADIIGAYGYASELSSGKDTPSGHWEIAGVPVLFDWGYFSDVENSFPQELLDKLVKRANLPGYLGNCHSSGTVILDQLGEEHMKTGKPIFYTSADSVFQIACHEETFGLDRLYELCEIAREELTDGGYNIGRVIARPFIGDKPGHFQRTGNRHDLAVEPPAPTMLKKLVDEKGGEVVSIGKIADIYAQVGITQKVKATGLDALFDATIEEMKKAGDNTIVFTNFVDFDSSYGHRRDVAGYAAALELFDRRLPELMALIKEDDILILTADHGCDPTWPGTDHTREHIPVLVYGPKVKPGSLGHRETFADIGQTVAAYFGLSPMDYGKNML</sequence>
<proteinExistence type="inferred from homology"/>
<accession>Q8ZIQ3</accession>
<accession>Q0WJM5</accession>
<accession>Q8CZN8</accession>
<name>DEOB_YERPE</name>
<gene>
    <name evidence="1" type="primary">deoB</name>
    <name type="ordered locus">YPO0439</name>
    <name type="ordered locus">y3741</name>
    <name type="ordered locus">YP_3743</name>
</gene>
<protein>
    <recommendedName>
        <fullName evidence="1">Phosphopentomutase</fullName>
        <ecNumber evidence="1">5.4.2.7</ecNumber>
    </recommendedName>
    <alternativeName>
        <fullName evidence="1">Phosphodeoxyribomutase</fullName>
    </alternativeName>
</protein>
<evidence type="ECO:0000255" key="1">
    <source>
        <dbReference type="HAMAP-Rule" id="MF_00740"/>
    </source>
</evidence>
<evidence type="ECO:0000305" key="2"/>
<feature type="chain" id="PRO_0000199865" description="Phosphopentomutase">
    <location>
        <begin position="1"/>
        <end position="407"/>
    </location>
</feature>
<feature type="binding site" evidence="1">
    <location>
        <position position="10"/>
    </location>
    <ligand>
        <name>Mn(2+)</name>
        <dbReference type="ChEBI" id="CHEBI:29035"/>
        <label>1</label>
    </ligand>
</feature>
<feature type="binding site" evidence="1">
    <location>
        <position position="306"/>
    </location>
    <ligand>
        <name>Mn(2+)</name>
        <dbReference type="ChEBI" id="CHEBI:29035"/>
        <label>2</label>
    </ligand>
</feature>
<feature type="binding site" evidence="1">
    <location>
        <position position="311"/>
    </location>
    <ligand>
        <name>Mn(2+)</name>
        <dbReference type="ChEBI" id="CHEBI:29035"/>
        <label>2</label>
    </ligand>
</feature>
<feature type="binding site" evidence="1">
    <location>
        <position position="347"/>
    </location>
    <ligand>
        <name>Mn(2+)</name>
        <dbReference type="ChEBI" id="CHEBI:29035"/>
        <label>1</label>
    </ligand>
</feature>
<feature type="binding site" evidence="1">
    <location>
        <position position="348"/>
    </location>
    <ligand>
        <name>Mn(2+)</name>
        <dbReference type="ChEBI" id="CHEBI:29035"/>
        <label>1</label>
    </ligand>
</feature>
<feature type="binding site" evidence="1">
    <location>
        <position position="359"/>
    </location>
    <ligand>
        <name>Mn(2+)</name>
        <dbReference type="ChEBI" id="CHEBI:29035"/>
        <label>2</label>
    </ligand>
</feature>
<dbReference type="EC" id="5.4.2.7" evidence="1"/>
<dbReference type="EMBL" id="AL590842">
    <property type="protein sequence ID" value="CAL19119.1"/>
    <property type="molecule type" value="Genomic_DNA"/>
</dbReference>
<dbReference type="EMBL" id="AE009952">
    <property type="protein sequence ID" value="AAM87287.1"/>
    <property type="status" value="ALT_INIT"/>
    <property type="molecule type" value="Genomic_DNA"/>
</dbReference>
<dbReference type="EMBL" id="AE017042">
    <property type="protein sequence ID" value="AAS63891.1"/>
    <property type="status" value="ALT_INIT"/>
    <property type="molecule type" value="Genomic_DNA"/>
</dbReference>
<dbReference type="PIR" id="AE0054">
    <property type="entry name" value="AE0054"/>
</dbReference>
<dbReference type="RefSeq" id="WP_002209216.1">
    <property type="nucleotide sequence ID" value="NZ_WUCM01000002.1"/>
</dbReference>
<dbReference type="RefSeq" id="YP_002345513.1">
    <property type="nucleotide sequence ID" value="NC_003143.1"/>
</dbReference>
<dbReference type="SMR" id="Q8ZIQ3"/>
<dbReference type="IntAct" id="Q8ZIQ3">
    <property type="interactions" value="4"/>
</dbReference>
<dbReference type="STRING" id="214092.YPO0439"/>
<dbReference type="PaxDb" id="214092-YPO0439"/>
<dbReference type="DNASU" id="1148688"/>
<dbReference type="EnsemblBacteria" id="AAS63891">
    <property type="protein sequence ID" value="AAS63891"/>
    <property type="gene ID" value="YP_3743"/>
</dbReference>
<dbReference type="GeneID" id="57974169"/>
<dbReference type="KEGG" id="ype:YPO0439"/>
<dbReference type="KEGG" id="ypk:y3741"/>
<dbReference type="KEGG" id="ypm:YP_3743"/>
<dbReference type="PATRIC" id="fig|214092.21.peg.683"/>
<dbReference type="eggNOG" id="COG1015">
    <property type="taxonomic scope" value="Bacteria"/>
</dbReference>
<dbReference type="HOGENOM" id="CLU_053861_0_0_6"/>
<dbReference type="OMA" id="SGHWEMM"/>
<dbReference type="OrthoDB" id="9769930at2"/>
<dbReference type="UniPathway" id="UPA00002">
    <property type="reaction ID" value="UER00467"/>
</dbReference>
<dbReference type="Proteomes" id="UP000000815">
    <property type="component" value="Chromosome"/>
</dbReference>
<dbReference type="Proteomes" id="UP000001019">
    <property type="component" value="Chromosome"/>
</dbReference>
<dbReference type="Proteomes" id="UP000002490">
    <property type="component" value="Chromosome"/>
</dbReference>
<dbReference type="GO" id="GO:0005829">
    <property type="term" value="C:cytosol"/>
    <property type="evidence" value="ECO:0000318"/>
    <property type="project" value="GO_Central"/>
</dbReference>
<dbReference type="GO" id="GO:0000287">
    <property type="term" value="F:magnesium ion binding"/>
    <property type="evidence" value="ECO:0007669"/>
    <property type="project" value="InterPro"/>
</dbReference>
<dbReference type="GO" id="GO:0030145">
    <property type="term" value="F:manganese ion binding"/>
    <property type="evidence" value="ECO:0007669"/>
    <property type="project" value="UniProtKB-UniRule"/>
</dbReference>
<dbReference type="GO" id="GO:0008973">
    <property type="term" value="F:phosphopentomutase activity"/>
    <property type="evidence" value="ECO:0000318"/>
    <property type="project" value="GO_Central"/>
</dbReference>
<dbReference type="GO" id="GO:0006018">
    <property type="term" value="P:2-deoxyribose 1-phosphate catabolic process"/>
    <property type="evidence" value="ECO:0007669"/>
    <property type="project" value="UniProtKB-UniRule"/>
</dbReference>
<dbReference type="GO" id="GO:0006015">
    <property type="term" value="P:5-phosphoribose 1-diphosphate biosynthetic process"/>
    <property type="evidence" value="ECO:0007669"/>
    <property type="project" value="UniProtKB-UniPathway"/>
</dbReference>
<dbReference type="GO" id="GO:0043094">
    <property type="term" value="P:metabolic compound salvage"/>
    <property type="evidence" value="ECO:0007669"/>
    <property type="project" value="InterPro"/>
</dbReference>
<dbReference type="GO" id="GO:0009117">
    <property type="term" value="P:nucleotide metabolic process"/>
    <property type="evidence" value="ECO:0007669"/>
    <property type="project" value="InterPro"/>
</dbReference>
<dbReference type="CDD" id="cd16009">
    <property type="entry name" value="PPM"/>
    <property type="match status" value="1"/>
</dbReference>
<dbReference type="FunFam" id="3.30.70.1250:FF:000001">
    <property type="entry name" value="Phosphopentomutase"/>
    <property type="match status" value="1"/>
</dbReference>
<dbReference type="Gene3D" id="3.40.720.10">
    <property type="entry name" value="Alkaline Phosphatase, subunit A"/>
    <property type="match status" value="1"/>
</dbReference>
<dbReference type="Gene3D" id="3.30.70.1250">
    <property type="entry name" value="Phosphopentomutase"/>
    <property type="match status" value="1"/>
</dbReference>
<dbReference type="HAMAP" id="MF_00740">
    <property type="entry name" value="Phosphopentomut"/>
    <property type="match status" value="1"/>
</dbReference>
<dbReference type="InterPro" id="IPR017850">
    <property type="entry name" value="Alkaline_phosphatase_core_sf"/>
</dbReference>
<dbReference type="InterPro" id="IPR010045">
    <property type="entry name" value="DeoB"/>
</dbReference>
<dbReference type="InterPro" id="IPR006124">
    <property type="entry name" value="Metalloenzyme"/>
</dbReference>
<dbReference type="InterPro" id="IPR024052">
    <property type="entry name" value="Phosphopentomutase_DeoB_cap_sf"/>
</dbReference>
<dbReference type="NCBIfam" id="TIGR01696">
    <property type="entry name" value="deoB"/>
    <property type="match status" value="1"/>
</dbReference>
<dbReference type="NCBIfam" id="NF003766">
    <property type="entry name" value="PRK05362.1"/>
    <property type="match status" value="1"/>
</dbReference>
<dbReference type="PANTHER" id="PTHR21110">
    <property type="entry name" value="PHOSPHOPENTOMUTASE"/>
    <property type="match status" value="1"/>
</dbReference>
<dbReference type="PANTHER" id="PTHR21110:SF0">
    <property type="entry name" value="PHOSPHOPENTOMUTASE"/>
    <property type="match status" value="1"/>
</dbReference>
<dbReference type="Pfam" id="PF01676">
    <property type="entry name" value="Metalloenzyme"/>
    <property type="match status" value="1"/>
</dbReference>
<dbReference type="PIRSF" id="PIRSF001491">
    <property type="entry name" value="Ppentomutase"/>
    <property type="match status" value="1"/>
</dbReference>
<dbReference type="SUPFAM" id="SSF53649">
    <property type="entry name" value="Alkaline phosphatase-like"/>
    <property type="match status" value="1"/>
</dbReference>
<dbReference type="SUPFAM" id="SSF143856">
    <property type="entry name" value="DeoB insert domain-like"/>
    <property type="match status" value="1"/>
</dbReference>
<comment type="function">
    <text evidence="1">Isomerase that catalyzes the conversion of deoxy-ribose 1-phosphate (dRib-1-P) and ribose 1-phosphate (Rib-1-P) to deoxy-ribose 5-phosphate (dRib-5-P) and ribose 5-phosphate (Rib-5-P), respectively.</text>
</comment>
<comment type="catalytic activity">
    <reaction evidence="1">
        <text>2-deoxy-alpha-D-ribose 1-phosphate = 2-deoxy-D-ribose 5-phosphate</text>
        <dbReference type="Rhea" id="RHEA:27658"/>
        <dbReference type="ChEBI" id="CHEBI:57259"/>
        <dbReference type="ChEBI" id="CHEBI:62877"/>
        <dbReference type="EC" id="5.4.2.7"/>
    </reaction>
</comment>
<comment type="catalytic activity">
    <reaction evidence="1">
        <text>alpha-D-ribose 1-phosphate = D-ribose 5-phosphate</text>
        <dbReference type="Rhea" id="RHEA:18793"/>
        <dbReference type="ChEBI" id="CHEBI:57720"/>
        <dbReference type="ChEBI" id="CHEBI:78346"/>
        <dbReference type="EC" id="5.4.2.7"/>
    </reaction>
</comment>
<comment type="cofactor">
    <cofactor evidence="1">
        <name>Mn(2+)</name>
        <dbReference type="ChEBI" id="CHEBI:29035"/>
    </cofactor>
    <text evidence="1">Binds 2 manganese ions.</text>
</comment>
<comment type="pathway">
    <text evidence="1">Carbohydrate degradation; 2-deoxy-D-ribose 1-phosphate degradation; D-glyceraldehyde 3-phosphate and acetaldehyde from 2-deoxy-alpha-D-ribose 1-phosphate: step 1/2.</text>
</comment>
<comment type="subcellular location">
    <subcellularLocation>
        <location evidence="1">Cytoplasm</location>
    </subcellularLocation>
</comment>
<comment type="similarity">
    <text evidence="1">Belongs to the phosphopentomutase family.</text>
</comment>
<comment type="sequence caution" evidence="2">
    <conflict type="erroneous initiation">
        <sequence resource="EMBL-CDS" id="AAM87287"/>
    </conflict>
</comment>
<comment type="sequence caution" evidence="2">
    <conflict type="erroneous initiation">
        <sequence resource="EMBL-CDS" id="AAS63891"/>
    </conflict>
</comment>
<organism>
    <name type="scientific">Yersinia pestis</name>
    <dbReference type="NCBI Taxonomy" id="632"/>
    <lineage>
        <taxon>Bacteria</taxon>
        <taxon>Pseudomonadati</taxon>
        <taxon>Pseudomonadota</taxon>
        <taxon>Gammaproteobacteria</taxon>
        <taxon>Enterobacterales</taxon>
        <taxon>Yersiniaceae</taxon>
        <taxon>Yersinia</taxon>
    </lineage>
</organism>
<reference key="1">
    <citation type="journal article" date="2001" name="Nature">
        <title>Genome sequence of Yersinia pestis, the causative agent of plague.</title>
        <authorList>
            <person name="Parkhill J."/>
            <person name="Wren B.W."/>
            <person name="Thomson N.R."/>
            <person name="Titball R.W."/>
            <person name="Holden M.T.G."/>
            <person name="Prentice M.B."/>
            <person name="Sebaihia M."/>
            <person name="James K.D."/>
            <person name="Churcher C.M."/>
            <person name="Mungall K.L."/>
            <person name="Baker S."/>
            <person name="Basham D."/>
            <person name="Bentley S.D."/>
            <person name="Brooks K."/>
            <person name="Cerdeno-Tarraga A.-M."/>
            <person name="Chillingworth T."/>
            <person name="Cronin A."/>
            <person name="Davies R.M."/>
            <person name="Davis P."/>
            <person name="Dougan G."/>
            <person name="Feltwell T."/>
            <person name="Hamlin N."/>
            <person name="Holroyd S."/>
            <person name="Jagels K."/>
            <person name="Karlyshev A.V."/>
            <person name="Leather S."/>
            <person name="Moule S."/>
            <person name="Oyston P.C.F."/>
            <person name="Quail M.A."/>
            <person name="Rutherford K.M."/>
            <person name="Simmonds M."/>
            <person name="Skelton J."/>
            <person name="Stevens K."/>
            <person name="Whitehead S."/>
            <person name="Barrell B.G."/>
        </authorList>
    </citation>
    <scope>NUCLEOTIDE SEQUENCE [LARGE SCALE GENOMIC DNA]</scope>
    <source>
        <strain>CO-92 / Biovar Orientalis</strain>
    </source>
</reference>
<reference key="2">
    <citation type="journal article" date="2002" name="J. Bacteriol.">
        <title>Genome sequence of Yersinia pestis KIM.</title>
        <authorList>
            <person name="Deng W."/>
            <person name="Burland V."/>
            <person name="Plunkett G. III"/>
            <person name="Boutin A."/>
            <person name="Mayhew G.F."/>
            <person name="Liss P."/>
            <person name="Perna N.T."/>
            <person name="Rose D.J."/>
            <person name="Mau B."/>
            <person name="Zhou S."/>
            <person name="Schwartz D.C."/>
            <person name="Fetherston J.D."/>
            <person name="Lindler L.E."/>
            <person name="Brubaker R.R."/>
            <person name="Plano G.V."/>
            <person name="Straley S.C."/>
            <person name="McDonough K.A."/>
            <person name="Nilles M.L."/>
            <person name="Matson J.S."/>
            <person name="Blattner F.R."/>
            <person name="Perry R.D."/>
        </authorList>
    </citation>
    <scope>NUCLEOTIDE SEQUENCE [LARGE SCALE GENOMIC DNA]</scope>
    <source>
        <strain>KIM10+ / Biovar Mediaevalis</strain>
    </source>
</reference>
<reference key="3">
    <citation type="journal article" date="2004" name="DNA Res.">
        <title>Complete genome sequence of Yersinia pestis strain 91001, an isolate avirulent to humans.</title>
        <authorList>
            <person name="Song Y."/>
            <person name="Tong Z."/>
            <person name="Wang J."/>
            <person name="Wang L."/>
            <person name="Guo Z."/>
            <person name="Han Y."/>
            <person name="Zhang J."/>
            <person name="Pei D."/>
            <person name="Zhou D."/>
            <person name="Qin H."/>
            <person name="Pang X."/>
            <person name="Han Y."/>
            <person name="Zhai J."/>
            <person name="Li M."/>
            <person name="Cui B."/>
            <person name="Qi Z."/>
            <person name="Jin L."/>
            <person name="Dai R."/>
            <person name="Chen F."/>
            <person name="Li S."/>
            <person name="Ye C."/>
            <person name="Du Z."/>
            <person name="Lin W."/>
            <person name="Wang J."/>
            <person name="Yu J."/>
            <person name="Yang H."/>
            <person name="Wang J."/>
            <person name="Huang P."/>
            <person name="Yang R."/>
        </authorList>
    </citation>
    <scope>NUCLEOTIDE SEQUENCE [LARGE SCALE GENOMIC DNA]</scope>
    <source>
        <strain>91001 / Biovar Mediaevalis</strain>
    </source>
</reference>
<keyword id="KW-0963">Cytoplasm</keyword>
<keyword id="KW-0413">Isomerase</keyword>
<keyword id="KW-0464">Manganese</keyword>
<keyword id="KW-0479">Metal-binding</keyword>
<keyword id="KW-1185">Reference proteome</keyword>